<accession>Q30YX6</accession>
<sequence length="201" mass="21560">MIAYIEGRVAEVTEQSCVVVTQGGVGYEVHLPSHLLARLPEQGAAVSFYIHTVVREDALELYGFSGWDERQTFLVLISISKVGAKTALAVLSLYRPDDLRRIVADDDVTALTRVSGIGKKSAQHILLELKYKLKVESLPASAGLAAGVPGSVLRDAVQALGNLGYAEEEAAPVLKNILKQDPDLDVSEALRAALKALAKAR</sequence>
<feature type="chain" id="PRO_0000224863" description="Holliday junction branch migration complex subunit RuvA">
    <location>
        <begin position="1"/>
        <end position="201"/>
    </location>
</feature>
<feature type="region of interest" description="Domain I" evidence="1">
    <location>
        <begin position="1"/>
        <end position="65"/>
    </location>
</feature>
<feature type="region of interest" description="Domain II" evidence="1">
    <location>
        <begin position="66"/>
        <end position="143"/>
    </location>
</feature>
<feature type="region of interest" description="Flexible linker" evidence="1">
    <location>
        <begin position="143"/>
        <end position="147"/>
    </location>
</feature>
<feature type="region of interest" description="Domain III" evidence="1">
    <location>
        <begin position="148"/>
        <end position="201"/>
    </location>
</feature>
<gene>
    <name evidence="1" type="primary">ruvA</name>
    <name type="ordered locus">Dde_2323</name>
</gene>
<organism>
    <name type="scientific">Oleidesulfovibrio alaskensis (strain ATCC BAA-1058 / DSM 17464 / G20)</name>
    <name type="common">Desulfovibrio alaskensis</name>
    <dbReference type="NCBI Taxonomy" id="207559"/>
    <lineage>
        <taxon>Bacteria</taxon>
        <taxon>Pseudomonadati</taxon>
        <taxon>Thermodesulfobacteriota</taxon>
        <taxon>Desulfovibrionia</taxon>
        <taxon>Desulfovibrionales</taxon>
        <taxon>Desulfovibrionaceae</taxon>
        <taxon>Oleidesulfovibrio</taxon>
    </lineage>
</organism>
<reference key="1">
    <citation type="journal article" date="2011" name="J. Bacteriol.">
        <title>Complete genome sequence and updated annotation of Desulfovibrio alaskensis G20.</title>
        <authorList>
            <person name="Hauser L.J."/>
            <person name="Land M.L."/>
            <person name="Brown S.D."/>
            <person name="Larimer F."/>
            <person name="Keller K.L."/>
            <person name="Rapp-Giles B.J."/>
            <person name="Price M.N."/>
            <person name="Lin M."/>
            <person name="Bruce D.C."/>
            <person name="Detter J.C."/>
            <person name="Tapia R."/>
            <person name="Han C.S."/>
            <person name="Goodwin L.A."/>
            <person name="Cheng J.F."/>
            <person name="Pitluck S."/>
            <person name="Copeland A."/>
            <person name="Lucas S."/>
            <person name="Nolan M."/>
            <person name="Lapidus A.L."/>
            <person name="Palumbo A.V."/>
            <person name="Wall J.D."/>
        </authorList>
    </citation>
    <scope>NUCLEOTIDE SEQUENCE [LARGE SCALE GENOMIC DNA]</scope>
    <source>
        <strain>ATCC BAA-1058 / DSM 17464 / G20</strain>
    </source>
</reference>
<protein>
    <recommendedName>
        <fullName evidence="1">Holliday junction branch migration complex subunit RuvA</fullName>
    </recommendedName>
</protein>
<dbReference type="EMBL" id="CP000112">
    <property type="protein sequence ID" value="ABB39120.1"/>
    <property type="molecule type" value="Genomic_DNA"/>
</dbReference>
<dbReference type="RefSeq" id="WP_011368200.1">
    <property type="nucleotide sequence ID" value="NC_007519.1"/>
</dbReference>
<dbReference type="SMR" id="Q30YX6"/>
<dbReference type="STRING" id="207559.Dde_2323"/>
<dbReference type="KEGG" id="dde:Dde_2323"/>
<dbReference type="eggNOG" id="COG0632">
    <property type="taxonomic scope" value="Bacteria"/>
</dbReference>
<dbReference type="HOGENOM" id="CLU_087936_0_0_7"/>
<dbReference type="Proteomes" id="UP000002710">
    <property type="component" value="Chromosome"/>
</dbReference>
<dbReference type="GO" id="GO:0005737">
    <property type="term" value="C:cytoplasm"/>
    <property type="evidence" value="ECO:0007669"/>
    <property type="project" value="UniProtKB-SubCell"/>
</dbReference>
<dbReference type="GO" id="GO:0009379">
    <property type="term" value="C:Holliday junction helicase complex"/>
    <property type="evidence" value="ECO:0007669"/>
    <property type="project" value="InterPro"/>
</dbReference>
<dbReference type="GO" id="GO:0048476">
    <property type="term" value="C:Holliday junction resolvase complex"/>
    <property type="evidence" value="ECO:0007669"/>
    <property type="project" value="UniProtKB-UniRule"/>
</dbReference>
<dbReference type="GO" id="GO:0005524">
    <property type="term" value="F:ATP binding"/>
    <property type="evidence" value="ECO:0007669"/>
    <property type="project" value="InterPro"/>
</dbReference>
<dbReference type="GO" id="GO:0000400">
    <property type="term" value="F:four-way junction DNA binding"/>
    <property type="evidence" value="ECO:0007669"/>
    <property type="project" value="UniProtKB-UniRule"/>
</dbReference>
<dbReference type="GO" id="GO:0009378">
    <property type="term" value="F:four-way junction helicase activity"/>
    <property type="evidence" value="ECO:0007669"/>
    <property type="project" value="InterPro"/>
</dbReference>
<dbReference type="GO" id="GO:0006310">
    <property type="term" value="P:DNA recombination"/>
    <property type="evidence" value="ECO:0007669"/>
    <property type="project" value="UniProtKB-UniRule"/>
</dbReference>
<dbReference type="GO" id="GO:0006281">
    <property type="term" value="P:DNA repair"/>
    <property type="evidence" value="ECO:0007669"/>
    <property type="project" value="UniProtKB-UniRule"/>
</dbReference>
<dbReference type="CDD" id="cd14332">
    <property type="entry name" value="UBA_RuvA_C"/>
    <property type="match status" value="1"/>
</dbReference>
<dbReference type="Gene3D" id="1.10.150.20">
    <property type="entry name" value="5' to 3' exonuclease, C-terminal subdomain"/>
    <property type="match status" value="1"/>
</dbReference>
<dbReference type="Gene3D" id="1.10.8.10">
    <property type="entry name" value="DNA helicase RuvA subunit, C-terminal domain"/>
    <property type="match status" value="1"/>
</dbReference>
<dbReference type="Gene3D" id="2.40.50.140">
    <property type="entry name" value="Nucleic acid-binding proteins"/>
    <property type="match status" value="1"/>
</dbReference>
<dbReference type="HAMAP" id="MF_00031">
    <property type="entry name" value="DNA_HJ_migration_RuvA"/>
    <property type="match status" value="1"/>
</dbReference>
<dbReference type="InterPro" id="IPR013849">
    <property type="entry name" value="DNA_helicase_Holl-junc_RuvA_I"/>
</dbReference>
<dbReference type="InterPro" id="IPR012340">
    <property type="entry name" value="NA-bd_OB-fold"/>
</dbReference>
<dbReference type="InterPro" id="IPR000085">
    <property type="entry name" value="RuvA"/>
</dbReference>
<dbReference type="InterPro" id="IPR010994">
    <property type="entry name" value="RuvA_2-like"/>
</dbReference>
<dbReference type="InterPro" id="IPR011114">
    <property type="entry name" value="RuvA_C"/>
</dbReference>
<dbReference type="InterPro" id="IPR036267">
    <property type="entry name" value="RuvA_C_sf"/>
</dbReference>
<dbReference type="NCBIfam" id="TIGR00084">
    <property type="entry name" value="ruvA"/>
    <property type="match status" value="1"/>
</dbReference>
<dbReference type="Pfam" id="PF14520">
    <property type="entry name" value="HHH_5"/>
    <property type="match status" value="1"/>
</dbReference>
<dbReference type="Pfam" id="PF07499">
    <property type="entry name" value="RuvA_C"/>
    <property type="match status" value="1"/>
</dbReference>
<dbReference type="Pfam" id="PF01330">
    <property type="entry name" value="RuvA_N"/>
    <property type="match status" value="1"/>
</dbReference>
<dbReference type="SUPFAM" id="SSF46929">
    <property type="entry name" value="DNA helicase RuvA subunit, C-terminal domain"/>
    <property type="match status" value="1"/>
</dbReference>
<dbReference type="SUPFAM" id="SSF50249">
    <property type="entry name" value="Nucleic acid-binding proteins"/>
    <property type="match status" value="1"/>
</dbReference>
<dbReference type="SUPFAM" id="SSF47781">
    <property type="entry name" value="RuvA domain 2-like"/>
    <property type="match status" value="1"/>
</dbReference>
<keyword id="KW-0963">Cytoplasm</keyword>
<keyword id="KW-0227">DNA damage</keyword>
<keyword id="KW-0233">DNA recombination</keyword>
<keyword id="KW-0234">DNA repair</keyword>
<keyword id="KW-0238">DNA-binding</keyword>
<keyword id="KW-1185">Reference proteome</keyword>
<proteinExistence type="inferred from homology"/>
<evidence type="ECO:0000255" key="1">
    <source>
        <dbReference type="HAMAP-Rule" id="MF_00031"/>
    </source>
</evidence>
<comment type="function">
    <text evidence="1">The RuvA-RuvB-RuvC complex processes Holliday junction (HJ) DNA during genetic recombination and DNA repair, while the RuvA-RuvB complex plays an important role in the rescue of blocked DNA replication forks via replication fork reversal (RFR). RuvA specifically binds to HJ cruciform DNA, conferring on it an open structure. The RuvB hexamer acts as an ATP-dependent pump, pulling dsDNA into and through the RuvAB complex. HJ branch migration allows RuvC to scan DNA until it finds its consensus sequence, where it cleaves and resolves the cruciform DNA.</text>
</comment>
<comment type="subunit">
    <text evidence="1">Homotetramer. Forms an RuvA(8)-RuvB(12)-Holliday junction (HJ) complex. HJ DNA is sandwiched between 2 RuvA tetramers; dsDNA enters through RuvA and exits via RuvB. An RuvB hexamer assembles on each DNA strand where it exits the tetramer. Each RuvB hexamer is contacted by two RuvA subunits (via domain III) on 2 adjacent RuvB subunits; this complex drives branch migration. In the full resolvosome a probable DNA-RuvA(4)-RuvB(12)-RuvC(2) complex forms which resolves the HJ.</text>
</comment>
<comment type="subcellular location">
    <subcellularLocation>
        <location evidence="1">Cytoplasm</location>
    </subcellularLocation>
</comment>
<comment type="domain">
    <text evidence="1">Has three domains with a flexible linker between the domains II and III and assumes an 'L' shape. Domain III is highly mobile and contacts RuvB.</text>
</comment>
<comment type="similarity">
    <text evidence="1">Belongs to the RuvA family.</text>
</comment>
<name>RUVA_OLEA2</name>